<reference key="1">
    <citation type="journal article" date="2006" name="Mol. Genet. Genomics">
        <title>The chloroplast genome of Nicotiana sylvestris and Nicotiana tomentosiformis: complete sequencing confirms that the Nicotiana sylvestris progenitor is the maternal genome donor of Nicotiana tabacum.</title>
        <authorList>
            <person name="Yukawa M."/>
            <person name="Tsudzuki T."/>
            <person name="Sugiura M."/>
        </authorList>
    </citation>
    <scope>NUCLEOTIDE SEQUENCE [LARGE SCALE GENOMIC DNA]</scope>
</reference>
<evidence type="ECO:0000250" key="1"/>
<evidence type="ECO:0000255" key="2"/>
<evidence type="ECO:0000305" key="3"/>
<dbReference type="EC" id="7.1.1.-"/>
<dbReference type="EMBL" id="AB240139">
    <property type="protein sequence ID" value="BAE48066.1"/>
    <property type="molecule type" value="Genomic_DNA"/>
</dbReference>
<dbReference type="RefSeq" id="YP_398926.1">
    <property type="nucleotide sequence ID" value="NC_007602.1"/>
</dbReference>
<dbReference type="SMR" id="Q33BW9"/>
<dbReference type="GeneID" id="3776353"/>
<dbReference type="KEGG" id="nto:3776353"/>
<dbReference type="OrthoDB" id="1893972at2759"/>
<dbReference type="GO" id="GO:0009535">
    <property type="term" value="C:chloroplast thylakoid membrane"/>
    <property type="evidence" value="ECO:0007669"/>
    <property type="project" value="UniProtKB-SubCell"/>
</dbReference>
<dbReference type="GO" id="GO:0008137">
    <property type="term" value="F:NADH dehydrogenase (ubiquinone) activity"/>
    <property type="evidence" value="ECO:0007669"/>
    <property type="project" value="InterPro"/>
</dbReference>
<dbReference type="GO" id="GO:0048038">
    <property type="term" value="F:quinone binding"/>
    <property type="evidence" value="ECO:0007669"/>
    <property type="project" value="UniProtKB-KW"/>
</dbReference>
<dbReference type="FunFam" id="1.20.120.1200:FF:000002">
    <property type="entry name" value="NAD(P)H-quinone oxidoreductase subunit 6, chloroplastic"/>
    <property type="match status" value="1"/>
</dbReference>
<dbReference type="Gene3D" id="1.20.120.1200">
    <property type="entry name" value="NADH-ubiquinone/plastoquinone oxidoreductase chain 6, subunit NuoJ"/>
    <property type="match status" value="1"/>
</dbReference>
<dbReference type="InterPro" id="IPR050290">
    <property type="entry name" value="NAD(P)H-Q_Oxidoreduct_6"/>
</dbReference>
<dbReference type="InterPro" id="IPR001457">
    <property type="entry name" value="NADH_UbQ/plastoQ_OxRdtase_su6"/>
</dbReference>
<dbReference type="InterPro" id="IPR042106">
    <property type="entry name" value="Nuo/plastoQ_OxRdtase_6_NuoJ"/>
</dbReference>
<dbReference type="PANTHER" id="PTHR48479">
    <property type="entry name" value="NAD(P)H-QUINONE OXIDOREDUCTASE SUBUNIT 6, CHLOROPLASTIC"/>
    <property type="match status" value="1"/>
</dbReference>
<dbReference type="PANTHER" id="PTHR48479:SF1">
    <property type="entry name" value="NAD(P)H-QUINONE OXIDOREDUCTASE SUBUNIT 6, CHLOROPLASTIC"/>
    <property type="match status" value="1"/>
</dbReference>
<dbReference type="Pfam" id="PF00499">
    <property type="entry name" value="Oxidored_q3"/>
    <property type="match status" value="1"/>
</dbReference>
<name>NU6C_NICTO</name>
<feature type="chain" id="PRO_0000360273" description="NAD(P)H-quinone oxidoreductase subunit 6, chloroplastic">
    <location>
        <begin position="1"/>
        <end position="176"/>
    </location>
</feature>
<feature type="transmembrane region" description="Helical" evidence="2">
    <location>
        <begin position="10"/>
        <end position="30"/>
    </location>
</feature>
<feature type="transmembrane region" description="Helical" evidence="2">
    <location>
        <begin position="32"/>
        <end position="52"/>
    </location>
</feature>
<feature type="transmembrane region" description="Helical" evidence="2">
    <location>
        <begin position="61"/>
        <end position="81"/>
    </location>
</feature>
<feature type="transmembrane region" description="Helical" evidence="2">
    <location>
        <begin position="92"/>
        <end position="112"/>
    </location>
</feature>
<feature type="transmembrane region" description="Helical" evidence="2">
    <location>
        <begin position="152"/>
        <end position="172"/>
    </location>
</feature>
<proteinExistence type="inferred from homology"/>
<comment type="function">
    <text evidence="1">NDH shuttles electrons from NAD(P)H:plastoquinone, via FMN and iron-sulfur (Fe-S) centers, to quinones in the photosynthetic chain and possibly in a chloroplast respiratory chain. The immediate electron acceptor for the enzyme in this species is believed to be plastoquinone. Couples the redox reaction to proton translocation, and thus conserves the redox energy in a proton gradient (By similarity).</text>
</comment>
<comment type="catalytic activity">
    <reaction>
        <text>a plastoquinone + NADH + (n+1) H(+)(in) = a plastoquinol + NAD(+) + n H(+)(out)</text>
        <dbReference type="Rhea" id="RHEA:42608"/>
        <dbReference type="Rhea" id="RHEA-COMP:9561"/>
        <dbReference type="Rhea" id="RHEA-COMP:9562"/>
        <dbReference type="ChEBI" id="CHEBI:15378"/>
        <dbReference type="ChEBI" id="CHEBI:17757"/>
        <dbReference type="ChEBI" id="CHEBI:57540"/>
        <dbReference type="ChEBI" id="CHEBI:57945"/>
        <dbReference type="ChEBI" id="CHEBI:62192"/>
    </reaction>
</comment>
<comment type="catalytic activity">
    <reaction>
        <text>a plastoquinone + NADPH + (n+1) H(+)(in) = a plastoquinol + NADP(+) + n H(+)(out)</text>
        <dbReference type="Rhea" id="RHEA:42612"/>
        <dbReference type="Rhea" id="RHEA-COMP:9561"/>
        <dbReference type="Rhea" id="RHEA-COMP:9562"/>
        <dbReference type="ChEBI" id="CHEBI:15378"/>
        <dbReference type="ChEBI" id="CHEBI:17757"/>
        <dbReference type="ChEBI" id="CHEBI:57783"/>
        <dbReference type="ChEBI" id="CHEBI:58349"/>
        <dbReference type="ChEBI" id="CHEBI:62192"/>
    </reaction>
</comment>
<comment type="subunit">
    <text evidence="1">NDH is composed of at least 16 different subunits, 5 of which are encoded in the nucleus.</text>
</comment>
<comment type="subcellular location">
    <subcellularLocation>
        <location evidence="1">Plastid</location>
        <location evidence="1">Chloroplast thylakoid membrane</location>
        <topology evidence="1">Multi-pass membrane protein</topology>
    </subcellularLocation>
</comment>
<comment type="similarity">
    <text evidence="3">Belongs to the complex I subunit 6 family.</text>
</comment>
<sequence>MDLSEPIHDFLLVFLGSGLILGGLGVVLLPNPIYSAFSLGLVLVCTSLFYILSNSYFVAAAQLLIYVGAINVLIIFAVMFMNGSEYYKDFHLWTVGDGITSMVCISLFISLITTISDTSWYGIIWTTRSNQIIEQDFISNSQQIGIHLSTDFFLPFELISIILLVALIGAIAVARQ</sequence>
<accession>Q33BW9</accession>
<protein>
    <recommendedName>
        <fullName>NAD(P)H-quinone oxidoreductase subunit 6, chloroplastic</fullName>
        <ecNumber>7.1.1.-</ecNumber>
    </recommendedName>
    <alternativeName>
        <fullName>NAD(P)H dehydrogenase subunit 6</fullName>
    </alternativeName>
    <alternativeName>
        <fullName>NADH-plastoquinone oxidoreductase subunit 6</fullName>
    </alternativeName>
</protein>
<geneLocation type="chloroplast"/>
<organism>
    <name type="scientific">Nicotiana tomentosiformis</name>
    <name type="common">Tobacco</name>
    <dbReference type="NCBI Taxonomy" id="4098"/>
    <lineage>
        <taxon>Eukaryota</taxon>
        <taxon>Viridiplantae</taxon>
        <taxon>Streptophyta</taxon>
        <taxon>Embryophyta</taxon>
        <taxon>Tracheophyta</taxon>
        <taxon>Spermatophyta</taxon>
        <taxon>Magnoliopsida</taxon>
        <taxon>eudicotyledons</taxon>
        <taxon>Gunneridae</taxon>
        <taxon>Pentapetalae</taxon>
        <taxon>asterids</taxon>
        <taxon>lamiids</taxon>
        <taxon>Solanales</taxon>
        <taxon>Solanaceae</taxon>
        <taxon>Nicotianoideae</taxon>
        <taxon>Nicotianeae</taxon>
        <taxon>Nicotiana</taxon>
    </lineage>
</organism>
<gene>
    <name type="primary">ndhG</name>
</gene>
<keyword id="KW-0150">Chloroplast</keyword>
<keyword id="KW-0472">Membrane</keyword>
<keyword id="KW-0520">NAD</keyword>
<keyword id="KW-0521">NADP</keyword>
<keyword id="KW-0934">Plastid</keyword>
<keyword id="KW-0618">Plastoquinone</keyword>
<keyword id="KW-0874">Quinone</keyword>
<keyword id="KW-0793">Thylakoid</keyword>
<keyword id="KW-1278">Translocase</keyword>
<keyword id="KW-0812">Transmembrane</keyword>
<keyword id="KW-1133">Transmembrane helix</keyword>
<keyword id="KW-0813">Transport</keyword>